<comment type="similarity">
    <text evidence="1">Belongs to the UPF0306 family.</text>
</comment>
<evidence type="ECO:0000255" key="1">
    <source>
        <dbReference type="HAMAP-Rule" id="MF_00764"/>
    </source>
</evidence>
<proteinExistence type="inferred from homology"/>
<reference key="1">
    <citation type="journal article" date="2007" name="PLoS Genet.">
        <title>The complete genome sequence of Yersinia pseudotuberculosis IP31758, the causative agent of Far East scarlet-like fever.</title>
        <authorList>
            <person name="Eppinger M."/>
            <person name="Rosovitz M.J."/>
            <person name="Fricke W.F."/>
            <person name="Rasko D.A."/>
            <person name="Kokorina G."/>
            <person name="Fayolle C."/>
            <person name="Lindler L.E."/>
            <person name="Carniel E."/>
            <person name="Ravel J."/>
        </authorList>
    </citation>
    <scope>NUCLEOTIDE SEQUENCE [LARGE SCALE GENOMIC DNA]</scope>
    <source>
        <strain>IP 31758</strain>
    </source>
</reference>
<sequence>MNNPDDVLLINRFLRQQHVLTLCAGSGMDMWCASCFYVFDENQMALFLMTEKHTRHSELMLINPQVAGTVATQSRTIALIKGIQYRGDISLLSGDAEQAARNRYCRRFPVAKVSSAPLWQLNLLEIKMTNNALGFGKKLHWSRVEPL</sequence>
<gene>
    <name type="ordered locus">YpsIP31758_3570</name>
</gene>
<organism>
    <name type="scientific">Yersinia pseudotuberculosis serotype O:1b (strain IP 31758)</name>
    <dbReference type="NCBI Taxonomy" id="349747"/>
    <lineage>
        <taxon>Bacteria</taxon>
        <taxon>Pseudomonadati</taxon>
        <taxon>Pseudomonadota</taxon>
        <taxon>Gammaproteobacteria</taxon>
        <taxon>Enterobacterales</taxon>
        <taxon>Yersiniaceae</taxon>
        <taxon>Yersinia</taxon>
    </lineage>
</organism>
<feature type="chain" id="PRO_1000062217" description="UPF0306 protein YpsIP31758_3570">
    <location>
        <begin position="1"/>
        <end position="147"/>
    </location>
</feature>
<accession>A7FMP6</accession>
<protein>
    <recommendedName>
        <fullName evidence="1">UPF0306 protein YpsIP31758_3570</fullName>
    </recommendedName>
</protein>
<dbReference type="EMBL" id="CP000720">
    <property type="protein sequence ID" value="ABS46294.1"/>
    <property type="molecule type" value="Genomic_DNA"/>
</dbReference>
<dbReference type="RefSeq" id="WP_011191642.1">
    <property type="nucleotide sequence ID" value="NC_009708.1"/>
</dbReference>
<dbReference type="SMR" id="A7FMP6"/>
<dbReference type="KEGG" id="ypi:YpsIP31758_3570"/>
<dbReference type="HOGENOM" id="CLU_105087_3_0_6"/>
<dbReference type="Proteomes" id="UP000002412">
    <property type="component" value="Chromosome"/>
</dbReference>
<dbReference type="Gene3D" id="2.30.110.10">
    <property type="entry name" value="Electron Transport, Fmn-binding Protein, Chain A"/>
    <property type="match status" value="1"/>
</dbReference>
<dbReference type="HAMAP" id="MF_00764">
    <property type="entry name" value="UPF0306"/>
    <property type="match status" value="1"/>
</dbReference>
<dbReference type="InterPro" id="IPR012349">
    <property type="entry name" value="Split_barrel_FMN-bd"/>
</dbReference>
<dbReference type="InterPro" id="IPR011194">
    <property type="entry name" value="UPF0306"/>
</dbReference>
<dbReference type="NCBIfam" id="NF002900">
    <property type="entry name" value="PRK03467.1"/>
    <property type="match status" value="1"/>
</dbReference>
<dbReference type="PIRSF" id="PIRSF009554">
    <property type="entry name" value="UCP009554"/>
    <property type="match status" value="1"/>
</dbReference>
<dbReference type="SUPFAM" id="SSF50475">
    <property type="entry name" value="FMN-binding split barrel"/>
    <property type="match status" value="1"/>
</dbReference>
<name>Y3570_YERP3</name>